<keyword id="KW-0106">Calcium</keyword>
<keyword id="KW-0109">Calcium transport</keyword>
<keyword id="KW-0256">Endoplasmic reticulum</keyword>
<keyword id="KW-0406">Ion transport</keyword>
<keyword id="KW-0472">Membrane</keyword>
<keyword id="KW-1185">Reference proteome</keyword>
<keyword id="KW-0732">Signal</keyword>
<keyword id="KW-0812">Transmembrane</keyword>
<keyword id="KW-1133">Transmembrane helix</keyword>
<keyword id="KW-0813">Transport</keyword>
<organism>
    <name type="scientific">Pongo abelii</name>
    <name type="common">Sumatran orangutan</name>
    <name type="synonym">Pongo pygmaeus abelii</name>
    <dbReference type="NCBI Taxonomy" id="9601"/>
    <lineage>
        <taxon>Eukaryota</taxon>
        <taxon>Metazoa</taxon>
        <taxon>Chordata</taxon>
        <taxon>Craniata</taxon>
        <taxon>Vertebrata</taxon>
        <taxon>Euteleostomi</taxon>
        <taxon>Mammalia</taxon>
        <taxon>Eutheria</taxon>
        <taxon>Euarchontoglires</taxon>
        <taxon>Primates</taxon>
        <taxon>Haplorrhini</taxon>
        <taxon>Catarrhini</taxon>
        <taxon>Hominidae</taxon>
        <taxon>Pongo</taxon>
    </lineage>
</organism>
<gene>
    <name type="primary">SARAF</name>
    <name type="synonym">TMEM66</name>
</gene>
<reference key="1">
    <citation type="submission" date="2004-11" db="EMBL/GenBank/DDBJ databases">
        <authorList>
            <consortium name="The German cDNA consortium"/>
        </authorList>
    </citation>
    <scope>NUCLEOTIDE SEQUENCE [LARGE SCALE MRNA]</scope>
    <source>
        <tissue>Brain cortex</tissue>
    </source>
</reference>
<comment type="function">
    <text evidence="1">Negative regulator of store-operated Ca(2+) entry (SOCE) involved in protecting cells from Ca(2+) overfilling. In response to cytosolic Ca(2+) elevation after endoplasmic reticulum Ca(2+) refilling, promotes a slow inactivation of STIM (STIM1 or STIM2)-dependent SOCE activity: possibly act by facilitating the deoligomerization of STIM to efficiently turn off ORAI when the endoplasmic reticulum lumen is filled with the appropriate Ca(2+) levels, and thus preventing the overload of the cell with excessive Ca(2+) ions (By similarity).</text>
</comment>
<comment type="subunit">
    <text evidence="2">Interacts with STIM1; the interaction is inhibited by the interaction of STIM1 with EFHB.</text>
</comment>
<comment type="subcellular location">
    <subcellularLocation>
        <location evidence="1">Endoplasmic reticulum membrane</location>
        <topology evidence="1">Single-pass type I membrane protein</topology>
    </subcellularLocation>
    <text evidence="1">Translocates to the endoplasmic reticulum-plasma membrane (ER-PM) region in a STIM1-dependent manner following cytosolic Ca(2+) elevation.</text>
</comment>
<comment type="domain">
    <text evidence="1">The cytoplasmic C-terminal region mediates interaction with STIM1, while the N-terminal lumenal region mediates regulation of SOCE activity.</text>
</comment>
<comment type="similarity">
    <text evidence="5">Belongs to the SARAF family.</text>
</comment>
<feature type="signal peptide" evidence="3">
    <location>
        <begin position="1"/>
        <end position="30"/>
    </location>
</feature>
<feature type="chain" id="PRO_0000045487" description="Store-operated calcium entry-associated regulatory factor">
    <location>
        <begin position="31"/>
        <end position="339"/>
    </location>
</feature>
<feature type="topological domain" description="Lumenal" evidence="3">
    <location>
        <begin position="31"/>
        <end position="173"/>
    </location>
</feature>
<feature type="transmembrane region" description="Helical" evidence="3">
    <location>
        <begin position="174"/>
        <end position="194"/>
    </location>
</feature>
<feature type="topological domain" description="Cytoplasmic" evidence="3">
    <location>
        <begin position="195"/>
        <end position="339"/>
    </location>
</feature>
<feature type="region of interest" description="Disordered" evidence="4">
    <location>
        <begin position="313"/>
        <end position="339"/>
    </location>
</feature>
<feature type="compositionally biased region" description="Polar residues" evidence="4">
    <location>
        <begin position="316"/>
        <end position="330"/>
    </location>
</feature>
<accession>Q5R491</accession>
<evidence type="ECO:0000250" key="1"/>
<evidence type="ECO:0000250" key="2">
    <source>
        <dbReference type="UniProtKB" id="Q96BY9"/>
    </source>
</evidence>
<evidence type="ECO:0000255" key="3"/>
<evidence type="ECO:0000256" key="4">
    <source>
        <dbReference type="SAM" id="MobiDB-lite"/>
    </source>
</evidence>
<evidence type="ECO:0000305" key="5"/>
<sequence length="339" mass="36993">MASACGPGAAGHCLLLGLHLFLLTAGPALGWNDPECMLLRDVKALTLHYDRYTTSRRLDPIPQLKCVGGTAGCDSYTPKVIQCQNKGWDGYDVQWECKTDLDIAYKFGKTVVSCEGYESSEDQYVLRGSCGLEYNLDYTELGLQKLKESGKQHGFASFSDYYYKWYSADSCNMSGLITIVVLLGIAFVVYKLFLSDGQYSPPPYSEYPPFSHRYQRFTNSAGPPPPGFKSEFTGPQNTGHGATSGFGSAFTGQQGYENSGPGFWTGLGTGGILGYLFGSNRAATPFSDSWYYPSYPPSYPGTWNRAYSPLRGGSGSYSACSNSDTKTRTASGYGGTRRR</sequence>
<dbReference type="EMBL" id="CR861365">
    <property type="protein sequence ID" value="CAH93425.1"/>
    <property type="molecule type" value="mRNA"/>
</dbReference>
<dbReference type="RefSeq" id="NP_001127007.1">
    <property type="nucleotide sequence ID" value="NM_001133535.1"/>
</dbReference>
<dbReference type="SMR" id="Q5R491"/>
<dbReference type="FunCoup" id="Q5R491">
    <property type="interactions" value="689"/>
</dbReference>
<dbReference type="STRING" id="9601.ENSPPYP00000020718"/>
<dbReference type="GeneID" id="100174030"/>
<dbReference type="KEGG" id="pon:100174030"/>
<dbReference type="CTD" id="51669"/>
<dbReference type="eggNOG" id="ENOG502QT6Y">
    <property type="taxonomic scope" value="Eukaryota"/>
</dbReference>
<dbReference type="InParanoid" id="Q5R491"/>
<dbReference type="OrthoDB" id="20303at2759"/>
<dbReference type="Proteomes" id="UP000001595">
    <property type="component" value="Unplaced"/>
</dbReference>
<dbReference type="GO" id="GO:0005789">
    <property type="term" value="C:endoplasmic reticulum membrane"/>
    <property type="evidence" value="ECO:0000250"/>
    <property type="project" value="UniProtKB"/>
</dbReference>
<dbReference type="GO" id="GO:0140268">
    <property type="term" value="C:endoplasmic reticulum-plasma membrane contact site"/>
    <property type="evidence" value="ECO:0000250"/>
    <property type="project" value="UniProtKB"/>
</dbReference>
<dbReference type="GO" id="GO:0006816">
    <property type="term" value="P:calcium ion transport"/>
    <property type="evidence" value="ECO:0007669"/>
    <property type="project" value="UniProtKB-KW"/>
</dbReference>
<dbReference type="GO" id="GO:2001256">
    <property type="term" value="P:regulation of store-operated calcium entry"/>
    <property type="evidence" value="ECO:0000250"/>
    <property type="project" value="UniProtKB"/>
</dbReference>
<dbReference type="InterPro" id="IPR009567">
    <property type="entry name" value="SARAF"/>
</dbReference>
<dbReference type="PANTHER" id="PTHR15929">
    <property type="entry name" value="STORE-OPERATED CALCIUM ENTRY-ASSOCIATED REGULATORY FACTOR"/>
    <property type="match status" value="1"/>
</dbReference>
<dbReference type="PANTHER" id="PTHR15929:SF0">
    <property type="entry name" value="STORE-OPERATED CALCIUM ENTRY-ASSOCIATED REGULATORY FACTOR"/>
    <property type="match status" value="1"/>
</dbReference>
<dbReference type="Pfam" id="PF06682">
    <property type="entry name" value="SARAF"/>
    <property type="match status" value="1"/>
</dbReference>
<protein>
    <recommendedName>
        <fullName>Store-operated calcium entry-associated regulatory factor</fullName>
        <shortName>SARAF</shortName>
        <shortName>SOCE-associated regulatory factor</shortName>
    </recommendedName>
    <alternativeName>
        <fullName>Transmembrane protein 66</fullName>
    </alternativeName>
</protein>
<name>SARAF_PONAB</name>
<proteinExistence type="evidence at transcript level"/>